<evidence type="ECO:0000255" key="1">
    <source>
        <dbReference type="HAMAP-Rule" id="MF_00443"/>
    </source>
</evidence>
<keyword id="KW-0963">Cytoplasm</keyword>
<keyword id="KW-1185">Reference proteome</keyword>
<keyword id="KW-0704">Schiff base</keyword>
<keyword id="KW-0784">Thiamine biosynthesis</keyword>
<keyword id="KW-0808">Transferase</keyword>
<organism>
    <name type="scientific">Pseudomonas putida (strain ATCC 47054 / DSM 6125 / CFBP 8728 / NCIMB 11950 / KT2440)</name>
    <dbReference type="NCBI Taxonomy" id="160488"/>
    <lineage>
        <taxon>Bacteria</taxon>
        <taxon>Pseudomonadati</taxon>
        <taxon>Pseudomonadota</taxon>
        <taxon>Gammaproteobacteria</taxon>
        <taxon>Pseudomonadales</taxon>
        <taxon>Pseudomonadaceae</taxon>
        <taxon>Pseudomonas</taxon>
    </lineage>
</organism>
<dbReference type="EC" id="2.8.1.10" evidence="1"/>
<dbReference type="EMBL" id="AE015451">
    <property type="protein sequence ID" value="AAN70669.1"/>
    <property type="molecule type" value="Genomic_DNA"/>
</dbReference>
<dbReference type="RefSeq" id="NP_747205.1">
    <property type="nucleotide sequence ID" value="NC_002947.4"/>
</dbReference>
<dbReference type="RefSeq" id="WP_003249091.1">
    <property type="nucleotide sequence ID" value="NZ_CP169744.1"/>
</dbReference>
<dbReference type="SMR" id="Q88CS6"/>
<dbReference type="STRING" id="160488.PP_5104"/>
<dbReference type="PaxDb" id="160488-PP_5104"/>
<dbReference type="KEGG" id="ppu:PP_5104"/>
<dbReference type="PATRIC" id="fig|160488.4.peg.5447"/>
<dbReference type="eggNOG" id="COG2022">
    <property type="taxonomic scope" value="Bacteria"/>
</dbReference>
<dbReference type="HOGENOM" id="CLU_062233_1_1_6"/>
<dbReference type="OrthoDB" id="9805935at2"/>
<dbReference type="PhylomeDB" id="Q88CS6"/>
<dbReference type="BioCyc" id="PPUT160488:G1G01-5448-MONOMER"/>
<dbReference type="UniPathway" id="UPA00060"/>
<dbReference type="Proteomes" id="UP000000556">
    <property type="component" value="Chromosome"/>
</dbReference>
<dbReference type="GO" id="GO:0005737">
    <property type="term" value="C:cytoplasm"/>
    <property type="evidence" value="ECO:0007669"/>
    <property type="project" value="UniProtKB-SubCell"/>
</dbReference>
<dbReference type="GO" id="GO:1990107">
    <property type="term" value="F:thiazole synthase activity"/>
    <property type="evidence" value="ECO:0007669"/>
    <property type="project" value="UniProtKB-EC"/>
</dbReference>
<dbReference type="GO" id="GO:0009229">
    <property type="term" value="P:thiamine diphosphate biosynthetic process"/>
    <property type="evidence" value="ECO:0007669"/>
    <property type="project" value="UniProtKB-UniRule"/>
</dbReference>
<dbReference type="CDD" id="cd04728">
    <property type="entry name" value="ThiG"/>
    <property type="match status" value="1"/>
</dbReference>
<dbReference type="Gene3D" id="3.20.20.70">
    <property type="entry name" value="Aldolase class I"/>
    <property type="match status" value="1"/>
</dbReference>
<dbReference type="HAMAP" id="MF_00443">
    <property type="entry name" value="ThiG"/>
    <property type="match status" value="1"/>
</dbReference>
<dbReference type="InterPro" id="IPR013785">
    <property type="entry name" value="Aldolase_TIM"/>
</dbReference>
<dbReference type="InterPro" id="IPR033983">
    <property type="entry name" value="Thiazole_synthase_ThiG"/>
</dbReference>
<dbReference type="InterPro" id="IPR008867">
    <property type="entry name" value="ThiG"/>
</dbReference>
<dbReference type="PANTHER" id="PTHR34266">
    <property type="entry name" value="THIAZOLE SYNTHASE"/>
    <property type="match status" value="1"/>
</dbReference>
<dbReference type="PANTHER" id="PTHR34266:SF2">
    <property type="entry name" value="THIAZOLE SYNTHASE"/>
    <property type="match status" value="1"/>
</dbReference>
<dbReference type="Pfam" id="PF05690">
    <property type="entry name" value="ThiG"/>
    <property type="match status" value="1"/>
</dbReference>
<dbReference type="SUPFAM" id="SSF110399">
    <property type="entry name" value="ThiG-like"/>
    <property type="match status" value="1"/>
</dbReference>
<name>THIG_PSEPK</name>
<sequence>MSNVRSDKPFTLAGRTFQSRLLVGTGKYRDMEETRLATEASGAEIVTVAVRRTNLGQNAGEPNLLDVLSPDKYTILPNTAGCFDAVEAVRTCRLARELLDGRKSHESRTLVKLEVLADQKTLFPNVIETLKAAEVLVKEGFDVMVYTSDDPIIARQLAEVGCIAVMPLAGLIGTGLGICNPYNLQIILEESKVPVLVDAGVGTASDATIAMEMGCEAVLMNSAIAHAQQPVLMAEAMKHAIVAGRMAYLAGRMPKKLYASASSPLDGLIK</sequence>
<comment type="function">
    <text evidence="1">Catalyzes the rearrangement of 1-deoxy-D-xylulose 5-phosphate (DXP) to produce the thiazole phosphate moiety of thiamine. Sulfur is provided by the thiocarboxylate moiety of the carrier protein ThiS. In vitro, sulfur can be provided by H(2)S.</text>
</comment>
<comment type="catalytic activity">
    <reaction evidence="1">
        <text>[ThiS sulfur-carrier protein]-C-terminal-Gly-aminoethanethioate + 2-iminoacetate + 1-deoxy-D-xylulose 5-phosphate = [ThiS sulfur-carrier protein]-C-terminal Gly-Gly + 2-[(2R,5Z)-2-carboxy-4-methylthiazol-5(2H)-ylidene]ethyl phosphate + 2 H2O + H(+)</text>
        <dbReference type="Rhea" id="RHEA:26297"/>
        <dbReference type="Rhea" id="RHEA-COMP:12909"/>
        <dbReference type="Rhea" id="RHEA-COMP:19908"/>
        <dbReference type="ChEBI" id="CHEBI:15377"/>
        <dbReference type="ChEBI" id="CHEBI:15378"/>
        <dbReference type="ChEBI" id="CHEBI:57792"/>
        <dbReference type="ChEBI" id="CHEBI:62899"/>
        <dbReference type="ChEBI" id="CHEBI:77846"/>
        <dbReference type="ChEBI" id="CHEBI:90778"/>
        <dbReference type="ChEBI" id="CHEBI:232372"/>
        <dbReference type="EC" id="2.8.1.10"/>
    </reaction>
</comment>
<comment type="pathway">
    <text evidence="1">Cofactor biosynthesis; thiamine diphosphate biosynthesis.</text>
</comment>
<comment type="subunit">
    <text evidence="1">Homotetramer. Forms heterodimers with either ThiH or ThiS.</text>
</comment>
<comment type="subcellular location">
    <subcellularLocation>
        <location evidence="1">Cytoplasm</location>
    </subcellularLocation>
</comment>
<comment type="similarity">
    <text evidence="1">Belongs to the ThiG family.</text>
</comment>
<feature type="chain" id="PRO_0000162846" description="Thiazole synthase">
    <location>
        <begin position="1"/>
        <end position="270"/>
    </location>
</feature>
<feature type="active site" description="Schiff-base intermediate with DXP" evidence="1">
    <location>
        <position position="112"/>
    </location>
</feature>
<feature type="binding site" evidence="1">
    <location>
        <position position="173"/>
    </location>
    <ligand>
        <name>1-deoxy-D-xylulose 5-phosphate</name>
        <dbReference type="ChEBI" id="CHEBI:57792"/>
    </ligand>
</feature>
<feature type="binding site" evidence="1">
    <location>
        <begin position="199"/>
        <end position="200"/>
    </location>
    <ligand>
        <name>1-deoxy-D-xylulose 5-phosphate</name>
        <dbReference type="ChEBI" id="CHEBI:57792"/>
    </ligand>
</feature>
<feature type="binding site" evidence="1">
    <location>
        <begin position="221"/>
        <end position="222"/>
    </location>
    <ligand>
        <name>1-deoxy-D-xylulose 5-phosphate</name>
        <dbReference type="ChEBI" id="CHEBI:57792"/>
    </ligand>
</feature>
<gene>
    <name evidence="1" type="primary">thiG</name>
    <name type="ordered locus">PP_5104</name>
</gene>
<reference key="1">
    <citation type="journal article" date="2002" name="Environ. Microbiol.">
        <title>Complete genome sequence and comparative analysis of the metabolically versatile Pseudomonas putida KT2440.</title>
        <authorList>
            <person name="Nelson K.E."/>
            <person name="Weinel C."/>
            <person name="Paulsen I.T."/>
            <person name="Dodson R.J."/>
            <person name="Hilbert H."/>
            <person name="Martins dos Santos V.A.P."/>
            <person name="Fouts D.E."/>
            <person name="Gill S.R."/>
            <person name="Pop M."/>
            <person name="Holmes M."/>
            <person name="Brinkac L.M."/>
            <person name="Beanan M.J."/>
            <person name="DeBoy R.T."/>
            <person name="Daugherty S.C."/>
            <person name="Kolonay J.F."/>
            <person name="Madupu R."/>
            <person name="Nelson W.C."/>
            <person name="White O."/>
            <person name="Peterson J.D."/>
            <person name="Khouri H.M."/>
            <person name="Hance I."/>
            <person name="Chris Lee P."/>
            <person name="Holtzapple E.K."/>
            <person name="Scanlan D."/>
            <person name="Tran K."/>
            <person name="Moazzez A."/>
            <person name="Utterback T.R."/>
            <person name="Rizzo M."/>
            <person name="Lee K."/>
            <person name="Kosack D."/>
            <person name="Moestl D."/>
            <person name="Wedler H."/>
            <person name="Lauber J."/>
            <person name="Stjepandic D."/>
            <person name="Hoheisel J."/>
            <person name="Straetz M."/>
            <person name="Heim S."/>
            <person name="Kiewitz C."/>
            <person name="Eisen J.A."/>
            <person name="Timmis K.N."/>
            <person name="Duesterhoeft A."/>
            <person name="Tuemmler B."/>
            <person name="Fraser C.M."/>
        </authorList>
    </citation>
    <scope>NUCLEOTIDE SEQUENCE [LARGE SCALE GENOMIC DNA]</scope>
    <source>
        <strain>ATCC 47054 / DSM 6125 / CFBP 8728 / NCIMB 11950 / KT2440</strain>
    </source>
</reference>
<proteinExistence type="inferred from homology"/>
<accession>Q88CS6</accession>
<protein>
    <recommendedName>
        <fullName evidence="1">Thiazole synthase</fullName>
        <ecNumber evidence="1">2.8.1.10</ecNumber>
    </recommendedName>
</protein>